<gene>
    <name type="primary">fliG</name>
    <name type="ordered locus">Z3029</name>
    <name type="ordered locus">ECs2678</name>
</gene>
<proteinExistence type="inferred from homology"/>
<feature type="chain" id="PRO_0000184090" description="Flagellar motor switch protein FliG">
    <location>
        <begin position="1"/>
        <end position="331"/>
    </location>
</feature>
<feature type="short sequence motif" description="Part of the EHPQR-motif">
    <location>
        <begin position="125"/>
        <end position="128"/>
    </location>
</feature>
<feature type="site" description="Part of the EHPQR-motif">
    <location>
        <position position="160"/>
    </location>
</feature>
<sequence>MSNLTGTDKSVILLMTIGEDRAAEVFKHLSQREVQTLSAAMANVTQISNKQLTDVLAEFEQEAEQFAALNINANDYLRSVLVKALGEERAASLLEDILETRDTASGIETLNFMEPQSAADLIRDEHPQIIATILVHLKRAQAADILALFDERLRHDVMLRIATFGGVQPAALAELTEVLNGLLDGQNLKRSKMGGVRTAAEIINLMKTQQEEAVITAVREFDGELAQKIIDEMFLFENLVDVDDRSIQRLLQEVDSESLLIALKGAEQPLREKFLRNMSQRAADILRDDLANRGPVRLSQVENEQKAILLIVRRLAETGEMVIGSGEDTYV</sequence>
<accession>P0ABZ3</accession>
<accession>P31067</accession>
<accession>P76915</accession>
<comment type="function">
    <text evidence="1">FliG is one of three proteins (FliG, FliN, FliM) that forms the rotor-mounted switch complex (C ring), located at the base of the basal body. This complex interacts with the CheY and CheZ chemotaxis proteins, in addition to contacting components of the motor that determine the direction of flagellar rotation (By similarity).</text>
</comment>
<comment type="subcellular location">
    <subcellularLocation>
        <location evidence="1">Cell inner membrane</location>
        <topology evidence="1">Peripheral membrane protein</topology>
        <orientation evidence="1">Cytoplasmic side</orientation>
    </subcellularLocation>
    <subcellularLocation>
        <location evidence="1">Bacterial flagellum basal body</location>
    </subcellularLocation>
</comment>
<comment type="similarity">
    <text evidence="2">Belongs to the FliG family.</text>
</comment>
<name>FLIG_ECO57</name>
<organism>
    <name type="scientific">Escherichia coli O157:H7</name>
    <dbReference type="NCBI Taxonomy" id="83334"/>
    <lineage>
        <taxon>Bacteria</taxon>
        <taxon>Pseudomonadati</taxon>
        <taxon>Pseudomonadota</taxon>
        <taxon>Gammaproteobacteria</taxon>
        <taxon>Enterobacterales</taxon>
        <taxon>Enterobacteriaceae</taxon>
        <taxon>Escherichia</taxon>
    </lineage>
</organism>
<keyword id="KW-0975">Bacterial flagellum</keyword>
<keyword id="KW-0997">Cell inner membrane</keyword>
<keyword id="KW-1003">Cell membrane</keyword>
<keyword id="KW-0145">Chemotaxis</keyword>
<keyword id="KW-0283">Flagellar rotation</keyword>
<keyword id="KW-0472">Membrane</keyword>
<keyword id="KW-1185">Reference proteome</keyword>
<evidence type="ECO:0000250" key="1"/>
<evidence type="ECO:0000305" key="2"/>
<dbReference type="EMBL" id="AE005174">
    <property type="protein sequence ID" value="AAG56954.1"/>
    <property type="molecule type" value="Genomic_DNA"/>
</dbReference>
<dbReference type="EMBL" id="BA000007">
    <property type="protein sequence ID" value="BAB36101.1"/>
    <property type="molecule type" value="Genomic_DNA"/>
</dbReference>
<dbReference type="PIR" id="F90963">
    <property type="entry name" value="F90963"/>
</dbReference>
<dbReference type="RefSeq" id="NP_310705.1">
    <property type="nucleotide sequence ID" value="NC_002695.1"/>
</dbReference>
<dbReference type="RefSeq" id="WP_000067950.1">
    <property type="nucleotide sequence ID" value="NZ_VOAI01000028.1"/>
</dbReference>
<dbReference type="SMR" id="P0ABZ3"/>
<dbReference type="STRING" id="155864.Z3029"/>
<dbReference type="GeneID" id="75205820"/>
<dbReference type="GeneID" id="912982"/>
<dbReference type="KEGG" id="ece:Z3029"/>
<dbReference type="KEGG" id="ecs:ECs_2678"/>
<dbReference type="PATRIC" id="fig|386585.9.peg.2805"/>
<dbReference type="eggNOG" id="COG1536">
    <property type="taxonomic scope" value="Bacteria"/>
</dbReference>
<dbReference type="HOGENOM" id="CLU_047835_2_0_6"/>
<dbReference type="OMA" id="FIQDEHP"/>
<dbReference type="Proteomes" id="UP000000558">
    <property type="component" value="Chromosome"/>
</dbReference>
<dbReference type="Proteomes" id="UP000002519">
    <property type="component" value="Chromosome"/>
</dbReference>
<dbReference type="GO" id="GO:0009425">
    <property type="term" value="C:bacterial-type flagellum basal body"/>
    <property type="evidence" value="ECO:0007669"/>
    <property type="project" value="UniProtKB-SubCell"/>
</dbReference>
<dbReference type="GO" id="GO:0005886">
    <property type="term" value="C:plasma membrane"/>
    <property type="evidence" value="ECO:0007669"/>
    <property type="project" value="UniProtKB-SubCell"/>
</dbReference>
<dbReference type="GO" id="GO:0003774">
    <property type="term" value="F:cytoskeletal motor activity"/>
    <property type="evidence" value="ECO:0007669"/>
    <property type="project" value="InterPro"/>
</dbReference>
<dbReference type="GO" id="GO:0071973">
    <property type="term" value="P:bacterial-type flagellum-dependent cell motility"/>
    <property type="evidence" value="ECO:0007669"/>
    <property type="project" value="InterPro"/>
</dbReference>
<dbReference type="GO" id="GO:0006935">
    <property type="term" value="P:chemotaxis"/>
    <property type="evidence" value="ECO:0007669"/>
    <property type="project" value="UniProtKB-KW"/>
</dbReference>
<dbReference type="FunFam" id="1.10.220.30:FF:000001">
    <property type="entry name" value="Flagellar motor switch protein FliG"/>
    <property type="match status" value="1"/>
</dbReference>
<dbReference type="FunFam" id="1.10.220.30:FF:000002">
    <property type="entry name" value="Flagellar motor switch protein FliG"/>
    <property type="match status" value="1"/>
</dbReference>
<dbReference type="FunFam" id="1.10.220.30:FF:000003">
    <property type="entry name" value="Flagellar motor switch protein FliG"/>
    <property type="match status" value="1"/>
</dbReference>
<dbReference type="Gene3D" id="1.10.220.30">
    <property type="match status" value="3"/>
</dbReference>
<dbReference type="InterPro" id="IPR000090">
    <property type="entry name" value="Flg_Motor_Flig"/>
</dbReference>
<dbReference type="InterPro" id="IPR023087">
    <property type="entry name" value="Flg_Motor_Flig_C"/>
</dbReference>
<dbReference type="InterPro" id="IPR011002">
    <property type="entry name" value="FliG_a-hlx"/>
</dbReference>
<dbReference type="InterPro" id="IPR032779">
    <property type="entry name" value="FliG_M"/>
</dbReference>
<dbReference type="InterPro" id="IPR028263">
    <property type="entry name" value="FliG_N"/>
</dbReference>
<dbReference type="NCBIfam" id="TIGR00207">
    <property type="entry name" value="fliG"/>
    <property type="match status" value="1"/>
</dbReference>
<dbReference type="PANTHER" id="PTHR30534">
    <property type="entry name" value="FLAGELLAR MOTOR SWITCH PROTEIN FLIG"/>
    <property type="match status" value="1"/>
</dbReference>
<dbReference type="PANTHER" id="PTHR30534:SF0">
    <property type="entry name" value="FLAGELLAR MOTOR SWITCH PROTEIN FLIG"/>
    <property type="match status" value="1"/>
</dbReference>
<dbReference type="Pfam" id="PF01706">
    <property type="entry name" value="FliG_C"/>
    <property type="match status" value="1"/>
</dbReference>
<dbReference type="Pfam" id="PF14841">
    <property type="entry name" value="FliG_M"/>
    <property type="match status" value="1"/>
</dbReference>
<dbReference type="Pfam" id="PF14842">
    <property type="entry name" value="FliG_N"/>
    <property type="match status" value="1"/>
</dbReference>
<dbReference type="PIRSF" id="PIRSF003161">
    <property type="entry name" value="FliG"/>
    <property type="match status" value="1"/>
</dbReference>
<dbReference type="PRINTS" id="PR00954">
    <property type="entry name" value="FLGMOTORFLIG"/>
</dbReference>
<dbReference type="SUPFAM" id="SSF48029">
    <property type="entry name" value="FliG"/>
    <property type="match status" value="2"/>
</dbReference>
<reference key="1">
    <citation type="journal article" date="2001" name="Nature">
        <title>Genome sequence of enterohaemorrhagic Escherichia coli O157:H7.</title>
        <authorList>
            <person name="Perna N.T."/>
            <person name="Plunkett G. III"/>
            <person name="Burland V."/>
            <person name="Mau B."/>
            <person name="Glasner J.D."/>
            <person name="Rose D.J."/>
            <person name="Mayhew G.F."/>
            <person name="Evans P.S."/>
            <person name="Gregor J."/>
            <person name="Kirkpatrick H.A."/>
            <person name="Posfai G."/>
            <person name="Hackett J."/>
            <person name="Klink S."/>
            <person name="Boutin A."/>
            <person name="Shao Y."/>
            <person name="Miller L."/>
            <person name="Grotbeck E.J."/>
            <person name="Davis N.W."/>
            <person name="Lim A."/>
            <person name="Dimalanta E.T."/>
            <person name="Potamousis K."/>
            <person name="Apodaca J."/>
            <person name="Anantharaman T.S."/>
            <person name="Lin J."/>
            <person name="Yen G."/>
            <person name="Schwartz D.C."/>
            <person name="Welch R.A."/>
            <person name="Blattner F.R."/>
        </authorList>
    </citation>
    <scope>NUCLEOTIDE SEQUENCE [LARGE SCALE GENOMIC DNA]</scope>
    <source>
        <strain>O157:H7 / EDL933 / ATCC 700927 / EHEC</strain>
    </source>
</reference>
<reference key="2">
    <citation type="journal article" date="2001" name="DNA Res.">
        <title>Complete genome sequence of enterohemorrhagic Escherichia coli O157:H7 and genomic comparison with a laboratory strain K-12.</title>
        <authorList>
            <person name="Hayashi T."/>
            <person name="Makino K."/>
            <person name="Ohnishi M."/>
            <person name="Kurokawa K."/>
            <person name="Ishii K."/>
            <person name="Yokoyama K."/>
            <person name="Han C.-G."/>
            <person name="Ohtsubo E."/>
            <person name="Nakayama K."/>
            <person name="Murata T."/>
            <person name="Tanaka M."/>
            <person name="Tobe T."/>
            <person name="Iida T."/>
            <person name="Takami H."/>
            <person name="Honda T."/>
            <person name="Sasakawa C."/>
            <person name="Ogasawara N."/>
            <person name="Yasunaga T."/>
            <person name="Kuhara S."/>
            <person name="Shiba T."/>
            <person name="Hattori M."/>
            <person name="Shinagawa H."/>
        </authorList>
    </citation>
    <scope>NUCLEOTIDE SEQUENCE [LARGE SCALE GENOMIC DNA]</scope>
    <source>
        <strain>O157:H7 / Sakai / RIMD 0509952 / EHEC</strain>
    </source>
</reference>
<protein>
    <recommendedName>
        <fullName>Flagellar motor switch protein FliG</fullName>
    </recommendedName>
</protein>